<evidence type="ECO:0000255" key="1"/>
<evidence type="ECO:0000255" key="2">
    <source>
        <dbReference type="HAMAP-Rule" id="MF_00625"/>
    </source>
</evidence>
<evidence type="ECO:0000305" key="3"/>
<name>SELD_CLOD6</name>
<organism>
    <name type="scientific">Clostridioides difficile (strain 630)</name>
    <name type="common">Peptoclostridium difficile</name>
    <dbReference type="NCBI Taxonomy" id="272563"/>
    <lineage>
        <taxon>Bacteria</taxon>
        <taxon>Bacillati</taxon>
        <taxon>Bacillota</taxon>
        <taxon>Clostridia</taxon>
        <taxon>Peptostreptococcales</taxon>
        <taxon>Peptostreptococcaceae</taxon>
        <taxon>Clostridioides</taxon>
    </lineage>
</organism>
<dbReference type="EC" id="2.7.9.3" evidence="2"/>
<dbReference type="EMBL" id="AM180355">
    <property type="protein sequence ID" value="CAJ69382.2"/>
    <property type="status" value="ALT_SEQ"/>
    <property type="molecule type" value="Genomic_DNA"/>
</dbReference>
<dbReference type="RefSeq" id="YP_001089009.2">
    <property type="nucleotide sequence ID" value="NC_009089.1"/>
</dbReference>
<dbReference type="STRING" id="272563.CD630_24960"/>
<dbReference type="EnsemblBacteria" id="CAJ69382">
    <property type="protein sequence ID" value="CAJ69382"/>
    <property type="gene ID" value="CD630_24960"/>
</dbReference>
<dbReference type="KEGG" id="cdf:CD630_24960"/>
<dbReference type="PATRIC" id="fig|272563.8.peg.2617"/>
<dbReference type="eggNOG" id="COG0709">
    <property type="taxonomic scope" value="Bacteria"/>
</dbReference>
<dbReference type="OrthoDB" id="9772934at2"/>
<dbReference type="PhylomeDB" id="Q182I1"/>
<dbReference type="BioCyc" id="PDIF272563:G12WB-2650-MONOMER"/>
<dbReference type="BRENDA" id="2.7.9.3">
    <property type="organism ID" value="1473"/>
</dbReference>
<dbReference type="Proteomes" id="UP000001978">
    <property type="component" value="Chromosome"/>
</dbReference>
<dbReference type="GO" id="GO:0005737">
    <property type="term" value="C:cytoplasm"/>
    <property type="evidence" value="ECO:0007669"/>
    <property type="project" value="TreeGrafter"/>
</dbReference>
<dbReference type="GO" id="GO:0005524">
    <property type="term" value="F:ATP binding"/>
    <property type="evidence" value="ECO:0007669"/>
    <property type="project" value="UniProtKB-UniRule"/>
</dbReference>
<dbReference type="GO" id="GO:0000287">
    <property type="term" value="F:magnesium ion binding"/>
    <property type="evidence" value="ECO:0007669"/>
    <property type="project" value="UniProtKB-UniRule"/>
</dbReference>
<dbReference type="GO" id="GO:0004756">
    <property type="term" value="F:selenide, water dikinase activity"/>
    <property type="evidence" value="ECO:0007669"/>
    <property type="project" value="UniProtKB-UniRule"/>
</dbReference>
<dbReference type="GO" id="GO:0016260">
    <property type="term" value="P:selenocysteine biosynthetic process"/>
    <property type="evidence" value="ECO:0007669"/>
    <property type="project" value="InterPro"/>
</dbReference>
<dbReference type="CDD" id="cd02195">
    <property type="entry name" value="SelD"/>
    <property type="match status" value="1"/>
</dbReference>
<dbReference type="FunFam" id="3.30.1330.10:FF:000003">
    <property type="entry name" value="Selenide, water dikinase"/>
    <property type="match status" value="1"/>
</dbReference>
<dbReference type="FunFam" id="3.90.650.10:FF:000004">
    <property type="entry name" value="Selenide, water dikinase"/>
    <property type="match status" value="1"/>
</dbReference>
<dbReference type="Gene3D" id="3.90.650.10">
    <property type="entry name" value="PurM-like C-terminal domain"/>
    <property type="match status" value="1"/>
</dbReference>
<dbReference type="Gene3D" id="3.30.1330.10">
    <property type="entry name" value="PurM-like, N-terminal domain"/>
    <property type="match status" value="1"/>
</dbReference>
<dbReference type="HAMAP" id="MF_00625">
    <property type="entry name" value="SelD"/>
    <property type="match status" value="1"/>
</dbReference>
<dbReference type="InterPro" id="IPR010918">
    <property type="entry name" value="PurM-like_C_dom"/>
</dbReference>
<dbReference type="InterPro" id="IPR036676">
    <property type="entry name" value="PurM-like_C_sf"/>
</dbReference>
<dbReference type="InterPro" id="IPR016188">
    <property type="entry name" value="PurM-like_N"/>
</dbReference>
<dbReference type="InterPro" id="IPR036921">
    <property type="entry name" value="PurM-like_N_sf"/>
</dbReference>
<dbReference type="InterPro" id="IPR023061">
    <property type="entry name" value="SelD_I"/>
</dbReference>
<dbReference type="InterPro" id="IPR004536">
    <property type="entry name" value="SPS/SelD"/>
</dbReference>
<dbReference type="NCBIfam" id="NF002098">
    <property type="entry name" value="PRK00943.1"/>
    <property type="match status" value="1"/>
</dbReference>
<dbReference type="NCBIfam" id="TIGR00476">
    <property type="entry name" value="selD"/>
    <property type="match status" value="1"/>
</dbReference>
<dbReference type="PANTHER" id="PTHR10256:SF0">
    <property type="entry name" value="INACTIVE SELENIDE, WATER DIKINASE-LIKE PROTEIN-RELATED"/>
    <property type="match status" value="1"/>
</dbReference>
<dbReference type="PANTHER" id="PTHR10256">
    <property type="entry name" value="SELENIDE, WATER DIKINASE"/>
    <property type="match status" value="1"/>
</dbReference>
<dbReference type="Pfam" id="PF00586">
    <property type="entry name" value="AIRS"/>
    <property type="match status" value="1"/>
</dbReference>
<dbReference type="Pfam" id="PF02769">
    <property type="entry name" value="AIRS_C"/>
    <property type="match status" value="1"/>
</dbReference>
<dbReference type="PIRSF" id="PIRSF036407">
    <property type="entry name" value="Selenphspht_syn"/>
    <property type="match status" value="1"/>
</dbReference>
<dbReference type="SUPFAM" id="SSF56042">
    <property type="entry name" value="PurM C-terminal domain-like"/>
    <property type="match status" value="1"/>
</dbReference>
<dbReference type="SUPFAM" id="SSF55326">
    <property type="entry name" value="PurM N-terminal domain-like"/>
    <property type="match status" value="1"/>
</dbReference>
<feature type="chain" id="PRO_0000318667" description="Selenide, water dikinase">
    <location>
        <begin position="1"/>
        <end position="348"/>
    </location>
</feature>
<feature type="active site" evidence="2">
    <location>
        <position position="17"/>
    </location>
</feature>
<feature type="binding site" description="in other chain" evidence="2">
    <location>
        <position position="20"/>
    </location>
    <ligand>
        <name>ATP</name>
        <dbReference type="ChEBI" id="CHEBI:30616"/>
        <note>ligand shared between dimeric partners</note>
    </ligand>
</feature>
<feature type="binding site" description="in other chain" evidence="2">
    <location>
        <begin position="48"/>
        <end position="50"/>
    </location>
    <ligand>
        <name>ATP</name>
        <dbReference type="ChEBI" id="CHEBI:30616"/>
        <note>ligand shared between dimeric partners</note>
    </ligand>
</feature>
<feature type="binding site" evidence="2">
    <location>
        <position position="51"/>
    </location>
    <ligand>
        <name>Mg(2+)</name>
        <dbReference type="ChEBI" id="CHEBI:18420"/>
    </ligand>
</feature>
<feature type="binding site" description="in other chain" evidence="2">
    <location>
        <position position="68"/>
    </location>
    <ligand>
        <name>ATP</name>
        <dbReference type="ChEBI" id="CHEBI:30616"/>
        <note>ligand shared between dimeric partners</note>
    </ligand>
</feature>
<feature type="binding site" description="in other chain" evidence="2">
    <location>
        <position position="91"/>
    </location>
    <ligand>
        <name>ATP</name>
        <dbReference type="ChEBI" id="CHEBI:30616"/>
        <note>ligand shared between dimeric partners</note>
    </ligand>
</feature>
<feature type="binding site" evidence="2">
    <location>
        <position position="91"/>
    </location>
    <ligand>
        <name>Mg(2+)</name>
        <dbReference type="ChEBI" id="CHEBI:18420"/>
    </ligand>
</feature>
<feature type="binding site" evidence="2">
    <location>
        <begin position="138"/>
        <end position="140"/>
    </location>
    <ligand>
        <name>ATP</name>
        <dbReference type="ChEBI" id="CHEBI:30616"/>
        <note>ligand shared between dimeric partners</note>
    </ligand>
</feature>
<feature type="binding site" evidence="2">
    <location>
        <position position="226"/>
    </location>
    <ligand>
        <name>Mg(2+)</name>
        <dbReference type="ChEBI" id="CHEBI:18420"/>
    </ligand>
</feature>
<feature type="site" description="Important for catalytic activity" evidence="2">
    <location>
        <position position="20"/>
    </location>
</feature>
<feature type="non-standard amino acid" description="Selenocysteine" evidence="1">
    <location>
        <position position="17"/>
    </location>
</feature>
<accession>Q182I1</accession>
<protein>
    <recommendedName>
        <fullName evidence="2">Selenide, water dikinase</fullName>
        <ecNumber evidence="2">2.7.9.3</ecNumber>
    </recommendedName>
    <alternativeName>
        <fullName evidence="2">Selenium donor protein</fullName>
    </alternativeName>
    <alternativeName>
        <fullName evidence="2">Selenophosphate synthase</fullName>
    </alternativeName>
</protein>
<comment type="function">
    <text evidence="2">Synthesizes selenophosphate from selenide and ATP.</text>
</comment>
<comment type="catalytic activity">
    <reaction evidence="2">
        <text>hydrogenselenide + ATP + H2O = selenophosphate + AMP + phosphate + 2 H(+)</text>
        <dbReference type="Rhea" id="RHEA:18737"/>
        <dbReference type="ChEBI" id="CHEBI:15377"/>
        <dbReference type="ChEBI" id="CHEBI:15378"/>
        <dbReference type="ChEBI" id="CHEBI:16144"/>
        <dbReference type="ChEBI" id="CHEBI:29317"/>
        <dbReference type="ChEBI" id="CHEBI:30616"/>
        <dbReference type="ChEBI" id="CHEBI:43474"/>
        <dbReference type="ChEBI" id="CHEBI:456215"/>
        <dbReference type="EC" id="2.7.9.3"/>
    </reaction>
</comment>
<comment type="cofactor">
    <cofactor evidence="2">
        <name>Mg(2+)</name>
        <dbReference type="ChEBI" id="CHEBI:18420"/>
    </cofactor>
    <text evidence="2">Binds 1 Mg(2+) ion per monomer.</text>
</comment>
<comment type="subunit">
    <text evidence="2">Homodimer.</text>
</comment>
<comment type="similarity">
    <text evidence="2">Belongs to the selenophosphate synthase 1 family. Class I subfamily.</text>
</comment>
<comment type="sequence caution" evidence="3">
    <conflict type="erroneous termination">
        <sequence resource="EMBL-CDS" id="CAJ69382"/>
    </conflict>
    <text>Truncated C-terminus.</text>
</comment>
<keyword id="KW-0067">ATP-binding</keyword>
<keyword id="KW-0418">Kinase</keyword>
<keyword id="KW-0460">Magnesium</keyword>
<keyword id="KW-0479">Metal-binding</keyword>
<keyword id="KW-0547">Nucleotide-binding</keyword>
<keyword id="KW-1185">Reference proteome</keyword>
<keyword id="KW-0711">Selenium</keyword>
<keyword id="KW-0712">Selenocysteine</keyword>
<keyword id="KW-0808">Transferase</keyword>
<gene>
    <name evidence="2" type="primary">selD</name>
    <name type="ordered locus">CD630_24960</name>
</gene>
<reference key="1">
    <citation type="journal article" date="2006" name="Nat. Genet.">
        <title>The multidrug-resistant human pathogen Clostridium difficile has a highly mobile, mosaic genome.</title>
        <authorList>
            <person name="Sebaihia M."/>
            <person name="Wren B.W."/>
            <person name="Mullany P."/>
            <person name="Fairweather N.F."/>
            <person name="Minton N."/>
            <person name="Stabler R."/>
            <person name="Thomson N.R."/>
            <person name="Roberts A.P."/>
            <person name="Cerdeno-Tarraga A.M."/>
            <person name="Wang H."/>
            <person name="Holden M.T.G."/>
            <person name="Wright A."/>
            <person name="Churcher C."/>
            <person name="Quail M.A."/>
            <person name="Baker S."/>
            <person name="Bason N."/>
            <person name="Brooks K."/>
            <person name="Chillingworth T."/>
            <person name="Cronin A."/>
            <person name="Davis P."/>
            <person name="Dowd L."/>
            <person name="Fraser A."/>
            <person name="Feltwell T."/>
            <person name="Hance Z."/>
            <person name="Holroyd S."/>
            <person name="Jagels K."/>
            <person name="Moule S."/>
            <person name="Mungall K."/>
            <person name="Price C."/>
            <person name="Rabbinowitsch E."/>
            <person name="Sharp S."/>
            <person name="Simmonds M."/>
            <person name="Stevens K."/>
            <person name="Unwin L."/>
            <person name="Whithead S."/>
            <person name="Dupuy B."/>
            <person name="Dougan G."/>
            <person name="Barrell B."/>
            <person name="Parkhill J."/>
        </authorList>
    </citation>
    <scope>NUCLEOTIDE SEQUENCE [LARGE SCALE GENOMIC DNA]</scope>
    <source>
        <strain>630</strain>
    </source>
</reference>
<sequence>MKKEQKKLTEMTTAGGUAAKIGPEVLASVLSQLPKNDNIENLLVGLDTADDAAVYKLNDDMALIQTLDFFTPMVDDPYVFGQIAASNSLSDVYAMGGKPLVAMNIVCFPSCHDMDVLAEILKGGFDKVKESGALLVGGHTVDDKEPKYGLSVSGIVSPNKVLSNATAKPGDKLIITKPIGVGVLNTAMKEGMVEQHIADKVIEIMIHLNKYAAMSFEKFDVNSVTDITGFGLLGHTLEMAKASEVSIEIESKHVPIIEGAIEMAQMGIIPAGMYKNMHYVSKDVEVVGNIEVAVQDILYDPQTSGGLLISVKEELAEELVKDMKLNGAIEAKIIGSVVPKGEKYITVL</sequence>
<proteinExistence type="inferred from homology"/>